<evidence type="ECO:0000256" key="1">
    <source>
        <dbReference type="SAM" id="MobiDB-lite"/>
    </source>
</evidence>
<evidence type="ECO:0000305" key="2"/>
<organism>
    <name type="scientific">Emericella nidulans (strain FGSC A4 / ATCC 38163 / CBS 112.46 / NRRL 194 / M139)</name>
    <name type="common">Aspergillus nidulans</name>
    <dbReference type="NCBI Taxonomy" id="227321"/>
    <lineage>
        <taxon>Eukaryota</taxon>
        <taxon>Fungi</taxon>
        <taxon>Dikarya</taxon>
        <taxon>Ascomycota</taxon>
        <taxon>Pezizomycotina</taxon>
        <taxon>Eurotiomycetes</taxon>
        <taxon>Eurotiomycetidae</taxon>
        <taxon>Eurotiales</taxon>
        <taxon>Aspergillaceae</taxon>
        <taxon>Aspergillus</taxon>
        <taxon>Aspergillus subgen. Nidulantes</taxon>
    </lineage>
</organism>
<name>PEP2_EMENI</name>
<dbReference type="EMBL" id="AACD01000172">
    <property type="protein sequence ID" value="EAA66341.1"/>
    <property type="molecule type" value="Genomic_DNA"/>
</dbReference>
<dbReference type="EMBL" id="BN001308">
    <property type="protein sequence ID" value="CBF87308.1"/>
    <property type="molecule type" value="Genomic_DNA"/>
</dbReference>
<dbReference type="RefSeq" id="XP_682543.1">
    <property type="nucleotide sequence ID" value="XM_677451.1"/>
</dbReference>
<dbReference type="SMR" id="Q5AR06"/>
<dbReference type="EnsemblFungi" id="CBF87308">
    <property type="protein sequence ID" value="CBF87308"/>
    <property type="gene ID" value="ANIA_09274"/>
</dbReference>
<dbReference type="KEGG" id="ani:ANIA_09274"/>
<dbReference type="VEuPathDB" id="FungiDB:AN9274"/>
<dbReference type="eggNOG" id="ENOG502RYCB">
    <property type="taxonomic scope" value="Eukaryota"/>
</dbReference>
<dbReference type="HOGENOM" id="CLU_067875_0_0_1"/>
<dbReference type="InParanoid" id="Q5AR06"/>
<dbReference type="OMA" id="TGRFYDF"/>
<dbReference type="OrthoDB" id="2533647at2759"/>
<dbReference type="Proteomes" id="UP000000560">
    <property type="component" value="Chromosome VIII"/>
</dbReference>
<dbReference type="Gene3D" id="3.10.450.50">
    <property type="match status" value="1"/>
</dbReference>
<dbReference type="InterPro" id="IPR032710">
    <property type="entry name" value="NTF2-like_dom_sf"/>
</dbReference>
<dbReference type="InterPro" id="IPR037401">
    <property type="entry name" value="SnoaL-like"/>
</dbReference>
<dbReference type="Pfam" id="PF13577">
    <property type="entry name" value="SnoaL_4"/>
    <property type="match status" value="1"/>
</dbReference>
<dbReference type="SUPFAM" id="SSF54427">
    <property type="entry name" value="NTF2-like"/>
    <property type="match status" value="1"/>
</dbReference>
<gene>
    <name type="ORF">AN9274</name>
</gene>
<reference key="1">
    <citation type="journal article" date="2005" name="Nature">
        <title>Sequencing of Aspergillus nidulans and comparative analysis with A. fumigatus and A. oryzae.</title>
        <authorList>
            <person name="Galagan J.E."/>
            <person name="Calvo S.E."/>
            <person name="Cuomo C."/>
            <person name="Ma L.-J."/>
            <person name="Wortman J.R."/>
            <person name="Batzoglou S."/>
            <person name="Lee S.-I."/>
            <person name="Bastuerkmen M."/>
            <person name="Spevak C.C."/>
            <person name="Clutterbuck J."/>
            <person name="Kapitonov V."/>
            <person name="Jurka J."/>
            <person name="Scazzocchio C."/>
            <person name="Farman M.L."/>
            <person name="Butler J."/>
            <person name="Purcell S."/>
            <person name="Harris S."/>
            <person name="Braus G.H."/>
            <person name="Draht O."/>
            <person name="Busch S."/>
            <person name="D'Enfert C."/>
            <person name="Bouchier C."/>
            <person name="Goldman G.H."/>
            <person name="Bell-Pedersen D."/>
            <person name="Griffiths-Jones S."/>
            <person name="Doonan J.H."/>
            <person name="Yu J."/>
            <person name="Vienken K."/>
            <person name="Pain A."/>
            <person name="Freitag M."/>
            <person name="Selker E.U."/>
            <person name="Archer D.B."/>
            <person name="Penalva M.A."/>
            <person name="Oakley B.R."/>
            <person name="Momany M."/>
            <person name="Tanaka T."/>
            <person name="Kumagai T."/>
            <person name="Asai K."/>
            <person name="Machida M."/>
            <person name="Nierman W.C."/>
            <person name="Denning D.W."/>
            <person name="Caddick M.X."/>
            <person name="Hynes M."/>
            <person name="Paoletti M."/>
            <person name="Fischer R."/>
            <person name="Miller B.L."/>
            <person name="Dyer P.S."/>
            <person name="Sachs M.S."/>
            <person name="Osmani S.A."/>
            <person name="Birren B.W."/>
        </authorList>
    </citation>
    <scope>NUCLEOTIDE SEQUENCE [LARGE SCALE GENOMIC DNA]</scope>
    <source>
        <strain>FGSC A4 / ATCC 38163 / CBS 112.46 / NRRL 194 / M139</strain>
    </source>
</reference>
<reference key="2">
    <citation type="journal article" date="2009" name="Fungal Genet. Biol.">
        <title>The 2008 update of the Aspergillus nidulans genome annotation: a community effort.</title>
        <authorList>
            <person name="Wortman J.R."/>
            <person name="Gilsenan J.M."/>
            <person name="Joardar V."/>
            <person name="Deegan J."/>
            <person name="Clutterbuck J."/>
            <person name="Andersen M.R."/>
            <person name="Archer D."/>
            <person name="Bencina M."/>
            <person name="Braus G."/>
            <person name="Coutinho P."/>
            <person name="von Dohren H."/>
            <person name="Doonan J."/>
            <person name="Driessen A.J."/>
            <person name="Durek P."/>
            <person name="Espeso E."/>
            <person name="Fekete E."/>
            <person name="Flipphi M."/>
            <person name="Estrada C.G."/>
            <person name="Geysens S."/>
            <person name="Goldman G."/>
            <person name="de Groot P.W."/>
            <person name="Hansen K."/>
            <person name="Harris S.D."/>
            <person name="Heinekamp T."/>
            <person name="Helmstaedt K."/>
            <person name="Henrissat B."/>
            <person name="Hofmann G."/>
            <person name="Homan T."/>
            <person name="Horio T."/>
            <person name="Horiuchi H."/>
            <person name="James S."/>
            <person name="Jones M."/>
            <person name="Karaffa L."/>
            <person name="Karanyi Z."/>
            <person name="Kato M."/>
            <person name="Keller N."/>
            <person name="Kelly D.E."/>
            <person name="Kiel J.A."/>
            <person name="Kim J.M."/>
            <person name="van der Klei I.J."/>
            <person name="Klis F.M."/>
            <person name="Kovalchuk A."/>
            <person name="Krasevec N."/>
            <person name="Kubicek C.P."/>
            <person name="Liu B."/>
            <person name="Maccabe A."/>
            <person name="Meyer V."/>
            <person name="Mirabito P."/>
            <person name="Miskei M."/>
            <person name="Mos M."/>
            <person name="Mullins J."/>
            <person name="Nelson D.R."/>
            <person name="Nielsen J."/>
            <person name="Oakley B.R."/>
            <person name="Osmani S.A."/>
            <person name="Pakula T."/>
            <person name="Paszewski A."/>
            <person name="Paulsen I."/>
            <person name="Pilsyk S."/>
            <person name="Pocsi I."/>
            <person name="Punt P.J."/>
            <person name="Ram A.F."/>
            <person name="Ren Q."/>
            <person name="Robellet X."/>
            <person name="Robson G."/>
            <person name="Seiboth B."/>
            <person name="van Solingen P."/>
            <person name="Specht T."/>
            <person name="Sun J."/>
            <person name="Taheri-Talesh N."/>
            <person name="Takeshita N."/>
            <person name="Ussery D."/>
            <person name="vanKuyk P.A."/>
            <person name="Visser H."/>
            <person name="van de Vondervoort P.J."/>
            <person name="de Vries R.P."/>
            <person name="Walton J."/>
            <person name="Xiang X."/>
            <person name="Xiong Y."/>
            <person name="Zeng A.P."/>
            <person name="Brandt B.W."/>
            <person name="Cornell M.J."/>
            <person name="van den Hondel C.A."/>
            <person name="Visser J."/>
            <person name="Oliver S.G."/>
            <person name="Turner G."/>
        </authorList>
    </citation>
    <scope>GENOME REANNOTATION</scope>
    <source>
        <strain>FGSC A4 / ATCC 38163 / CBS 112.46 / NRRL 194 / M139</strain>
    </source>
</reference>
<comment type="similarity">
    <text evidence="2">Belongs to the PEP2 family.</text>
</comment>
<feature type="chain" id="PRO_0000402440" description="Uncharacterized protein AN9274">
    <location>
        <begin position="1"/>
        <end position="238"/>
    </location>
</feature>
<feature type="region of interest" description="Disordered" evidence="1">
    <location>
        <begin position="1"/>
        <end position="20"/>
    </location>
</feature>
<sequence length="238" mass="27037">MPNLHSLPLGTRPENAIRNNGPDNLVLERAKLRELAEGWPCYRDACEWENFESIFHPDAVVYTTWSGRVGYKDFIAGSKAGMDNGAFIMHRCHGATTDITADATRAVTKLKATITQRFVIDGIEVDAEADCRFCFFFEKADVDGKGPRWGARFVRHWYEKDKLLPVVPGRFPKIDVDKLNSYPEGYKCLVYCQELTMGVKVLQDMPGHRRHAGTLSGEKHDLLYRLAKDWLDGKEIDV</sequence>
<keyword id="KW-1185">Reference proteome</keyword>
<accession>Q5AR06</accession>
<accession>C8VQC2</accession>
<protein>
    <recommendedName>
        <fullName>Uncharacterized protein AN9274</fullName>
    </recommendedName>
</protein>
<proteinExistence type="inferred from homology"/>